<dbReference type="EMBL" id="CP000813">
    <property type="protein sequence ID" value="ABV62826.1"/>
    <property type="molecule type" value="Genomic_DNA"/>
</dbReference>
<dbReference type="RefSeq" id="WP_012010523.1">
    <property type="nucleotide sequence ID" value="NZ_VEIS01000005.1"/>
</dbReference>
<dbReference type="SMR" id="A8FF09"/>
<dbReference type="STRING" id="315750.BPUM_2157"/>
<dbReference type="GeneID" id="5621423"/>
<dbReference type="KEGG" id="bpu:BPUM_2157"/>
<dbReference type="eggNOG" id="COG1438">
    <property type="taxonomic scope" value="Bacteria"/>
</dbReference>
<dbReference type="HOGENOM" id="CLU_097103_3_0_9"/>
<dbReference type="OrthoDB" id="9807089at2"/>
<dbReference type="UniPathway" id="UPA00068"/>
<dbReference type="Proteomes" id="UP000001355">
    <property type="component" value="Chromosome"/>
</dbReference>
<dbReference type="GO" id="GO:0005737">
    <property type="term" value="C:cytoplasm"/>
    <property type="evidence" value="ECO:0007669"/>
    <property type="project" value="UniProtKB-SubCell"/>
</dbReference>
<dbReference type="GO" id="GO:0034618">
    <property type="term" value="F:arginine binding"/>
    <property type="evidence" value="ECO:0007669"/>
    <property type="project" value="InterPro"/>
</dbReference>
<dbReference type="GO" id="GO:0003677">
    <property type="term" value="F:DNA binding"/>
    <property type="evidence" value="ECO:0007669"/>
    <property type="project" value="UniProtKB-KW"/>
</dbReference>
<dbReference type="GO" id="GO:0003700">
    <property type="term" value="F:DNA-binding transcription factor activity"/>
    <property type="evidence" value="ECO:0007669"/>
    <property type="project" value="UniProtKB-UniRule"/>
</dbReference>
<dbReference type="GO" id="GO:0006526">
    <property type="term" value="P:L-arginine biosynthetic process"/>
    <property type="evidence" value="ECO:0007669"/>
    <property type="project" value="UniProtKB-UniPathway"/>
</dbReference>
<dbReference type="GO" id="GO:0051259">
    <property type="term" value="P:protein complex oligomerization"/>
    <property type="evidence" value="ECO:0007669"/>
    <property type="project" value="InterPro"/>
</dbReference>
<dbReference type="GO" id="GO:1900079">
    <property type="term" value="P:regulation of arginine biosynthetic process"/>
    <property type="evidence" value="ECO:0007669"/>
    <property type="project" value="UniProtKB-UniRule"/>
</dbReference>
<dbReference type="FunFam" id="3.30.1360.40:FF:000006">
    <property type="entry name" value="Arginine repressor"/>
    <property type="match status" value="1"/>
</dbReference>
<dbReference type="Gene3D" id="3.30.1360.40">
    <property type="match status" value="1"/>
</dbReference>
<dbReference type="Gene3D" id="1.10.10.10">
    <property type="entry name" value="Winged helix-like DNA-binding domain superfamily/Winged helix DNA-binding domain"/>
    <property type="match status" value="1"/>
</dbReference>
<dbReference type="HAMAP" id="MF_00173">
    <property type="entry name" value="Arg_repressor"/>
    <property type="match status" value="1"/>
</dbReference>
<dbReference type="InterPro" id="IPR001669">
    <property type="entry name" value="Arg_repress"/>
</dbReference>
<dbReference type="InterPro" id="IPR020899">
    <property type="entry name" value="Arg_repress_C"/>
</dbReference>
<dbReference type="InterPro" id="IPR036251">
    <property type="entry name" value="Arg_repress_C_sf"/>
</dbReference>
<dbReference type="InterPro" id="IPR020900">
    <property type="entry name" value="Arg_repress_DNA-bd"/>
</dbReference>
<dbReference type="InterPro" id="IPR036388">
    <property type="entry name" value="WH-like_DNA-bd_sf"/>
</dbReference>
<dbReference type="InterPro" id="IPR036390">
    <property type="entry name" value="WH_DNA-bd_sf"/>
</dbReference>
<dbReference type="NCBIfam" id="TIGR01529">
    <property type="entry name" value="argR_whole"/>
    <property type="match status" value="1"/>
</dbReference>
<dbReference type="NCBIfam" id="NF003281">
    <property type="entry name" value="PRK04280.1"/>
    <property type="match status" value="1"/>
</dbReference>
<dbReference type="PANTHER" id="PTHR34471">
    <property type="entry name" value="ARGININE REPRESSOR"/>
    <property type="match status" value="1"/>
</dbReference>
<dbReference type="PANTHER" id="PTHR34471:SF1">
    <property type="entry name" value="ARGININE REPRESSOR"/>
    <property type="match status" value="1"/>
</dbReference>
<dbReference type="Pfam" id="PF01316">
    <property type="entry name" value="Arg_repressor"/>
    <property type="match status" value="1"/>
</dbReference>
<dbReference type="Pfam" id="PF02863">
    <property type="entry name" value="Arg_repressor_C"/>
    <property type="match status" value="1"/>
</dbReference>
<dbReference type="PRINTS" id="PR01467">
    <property type="entry name" value="ARGREPRESSOR"/>
</dbReference>
<dbReference type="SUPFAM" id="SSF55252">
    <property type="entry name" value="C-terminal domain of arginine repressor"/>
    <property type="match status" value="1"/>
</dbReference>
<dbReference type="SUPFAM" id="SSF46785">
    <property type="entry name" value="Winged helix' DNA-binding domain"/>
    <property type="match status" value="1"/>
</dbReference>
<evidence type="ECO:0000255" key="1">
    <source>
        <dbReference type="HAMAP-Rule" id="MF_00173"/>
    </source>
</evidence>
<name>ARGR_BACP2</name>
<comment type="function">
    <text evidence="1">Regulates arginine biosynthesis genes.</text>
</comment>
<comment type="pathway">
    <text>Amino-acid biosynthesis; L-arginine biosynthesis [regulation].</text>
</comment>
<comment type="subcellular location">
    <subcellularLocation>
        <location evidence="1">Cytoplasm</location>
    </subcellularLocation>
</comment>
<comment type="similarity">
    <text evidence="1">Belongs to the ArgR family.</text>
</comment>
<sequence length="149" mass="16686">MTKGQRHIKIREIIASQEIETQDELVDILKADGYNITQATVSRDIKELHLVKVPTNNGTYKYSLPADQRFNPLSKLKRSLMDAFIKMDAASHLIVLKTMPGNAQAIGALMDNLDWEEIMGTICGDDTILIICRTPDDTETVSSKILELL</sequence>
<reference key="1">
    <citation type="journal article" date="2007" name="PLoS ONE">
        <title>Paradoxical DNA repair and peroxide resistance gene conservation in Bacillus pumilus SAFR-032.</title>
        <authorList>
            <person name="Gioia J."/>
            <person name="Yerrapragada S."/>
            <person name="Qin X."/>
            <person name="Jiang H."/>
            <person name="Igboeli O.C."/>
            <person name="Muzny D."/>
            <person name="Dugan-Rocha S."/>
            <person name="Ding Y."/>
            <person name="Hawes A."/>
            <person name="Liu W."/>
            <person name="Perez L."/>
            <person name="Kovar C."/>
            <person name="Dinh H."/>
            <person name="Lee S."/>
            <person name="Nazareth L."/>
            <person name="Blyth P."/>
            <person name="Holder M."/>
            <person name="Buhay C."/>
            <person name="Tirumalai M.R."/>
            <person name="Liu Y."/>
            <person name="Dasgupta I."/>
            <person name="Bokhetache L."/>
            <person name="Fujita M."/>
            <person name="Karouia F."/>
            <person name="Eswara Moorthy P."/>
            <person name="Siefert J."/>
            <person name="Uzman A."/>
            <person name="Buzumbo P."/>
            <person name="Verma A."/>
            <person name="Zwiya H."/>
            <person name="McWilliams B.D."/>
            <person name="Olowu A."/>
            <person name="Clinkenbeard K.D."/>
            <person name="Newcombe D."/>
            <person name="Golebiewski L."/>
            <person name="Petrosino J.F."/>
            <person name="Nicholson W.L."/>
            <person name="Fox G.E."/>
            <person name="Venkateswaran K."/>
            <person name="Highlander S.K."/>
            <person name="Weinstock G.M."/>
        </authorList>
    </citation>
    <scope>NUCLEOTIDE SEQUENCE [LARGE SCALE GENOMIC DNA]</scope>
    <source>
        <strain>SAFR-032</strain>
    </source>
</reference>
<protein>
    <recommendedName>
        <fullName evidence="1">Arginine repressor</fullName>
    </recommendedName>
</protein>
<feature type="chain" id="PRO_1000058320" description="Arginine repressor">
    <location>
        <begin position="1"/>
        <end position="149"/>
    </location>
</feature>
<accession>A8FF09</accession>
<organism>
    <name type="scientific">Bacillus pumilus (strain SAFR-032)</name>
    <dbReference type="NCBI Taxonomy" id="315750"/>
    <lineage>
        <taxon>Bacteria</taxon>
        <taxon>Bacillati</taxon>
        <taxon>Bacillota</taxon>
        <taxon>Bacilli</taxon>
        <taxon>Bacillales</taxon>
        <taxon>Bacillaceae</taxon>
        <taxon>Bacillus</taxon>
    </lineage>
</organism>
<keyword id="KW-0028">Amino-acid biosynthesis</keyword>
<keyword id="KW-0055">Arginine biosynthesis</keyword>
<keyword id="KW-0963">Cytoplasm</keyword>
<keyword id="KW-0238">DNA-binding</keyword>
<keyword id="KW-0678">Repressor</keyword>
<keyword id="KW-0804">Transcription</keyword>
<keyword id="KW-0805">Transcription regulation</keyword>
<gene>
    <name evidence="1" type="primary">argR</name>
    <name type="ordered locus">BPUM_2157</name>
</gene>
<proteinExistence type="inferred from homology"/>